<keyword id="KW-0328">Glycosyltransferase</keyword>
<keyword id="KW-1185">Reference proteome</keyword>
<keyword id="KW-0808">Transferase</keyword>
<accession>A7TZT2</accession>
<accession>A9CK29</accession>
<gene>
    <name evidence="5" type="primary">mfpsA</name>
    <name type="ordered locus">Atu0661</name>
    <name type="ORF">AGR_C_1178</name>
</gene>
<sequence length="454" mass="51911">MEKFTKMGPMTTTSETERYPRIALISTHGYVAAHPPLGAADTGGQVVYVLELARKLGQLGYTVDLYTRRFEDQPEFDEVDERVRVVRIPCGGRDFIPKEYLHRHLMEWCENALRFIKKNDLNYSFINSHYWDAGVAGQRLSEALKIPHLHTPHSLGIWKKRQMETDYPEKADTFELEFNFKERIQHELIIYRSCDMVIATTPVQLDVLIEDYGLKRKHIHMIPPGYDDNRFFPVSDATRQMIRQRFGFEGKVVLALGRLATNKGYDLLIDGFSVLAEREPEARLHLAVGGENMDEQETTILNQLKERVKSLGLEDKVAFSGYVADEDLPDIYRAADLFVLSSRYEPFGMTAIEAMASGTPTVVTIHGGLFRAISYGRHALFADPFDKEDLGITMMKPFKHERLYGRLSRMGAHKARSLFTWTGIAQQLLALVEGRTMMPVLEEADWAEPWNDGD</sequence>
<evidence type="ECO:0000255" key="1"/>
<evidence type="ECO:0000269" key="2">
    <source>
    </source>
</evidence>
<evidence type="ECO:0000305" key="3"/>
<evidence type="ECO:0000312" key="4">
    <source>
        <dbReference type="EMBL" id="AAK86469.2"/>
    </source>
</evidence>
<evidence type="ECO:0000312" key="5">
    <source>
        <dbReference type="EMBL" id="ABU63292.1"/>
    </source>
</evidence>
<name>MFPS_AGRFC</name>
<feature type="chain" id="PRO_0000401102" description="Mannosylfructose-phosphate synthase">
    <location>
        <begin position="1"/>
        <end position="454"/>
    </location>
</feature>
<organism>
    <name type="scientific">Agrobacterium fabrum (strain C58 / ATCC 33970)</name>
    <name type="common">Agrobacterium tumefaciens (strain C58)</name>
    <dbReference type="NCBI Taxonomy" id="176299"/>
    <lineage>
        <taxon>Bacteria</taxon>
        <taxon>Pseudomonadati</taxon>
        <taxon>Pseudomonadota</taxon>
        <taxon>Alphaproteobacteria</taxon>
        <taxon>Hyphomicrobiales</taxon>
        <taxon>Rhizobiaceae</taxon>
        <taxon>Rhizobium/Agrobacterium group</taxon>
        <taxon>Agrobacterium</taxon>
        <taxon>Agrobacterium tumefaciens complex</taxon>
    </lineage>
</organism>
<dbReference type="EC" id="2.4.1.246"/>
<dbReference type="EMBL" id="EF530045">
    <property type="protein sequence ID" value="ABU63292.1"/>
    <property type="molecule type" value="Genomic_DNA"/>
</dbReference>
<dbReference type="EMBL" id="AE007869">
    <property type="protein sequence ID" value="AAK86469.2"/>
    <property type="status" value="ALT_INIT"/>
    <property type="molecule type" value="Genomic_DNA"/>
</dbReference>
<dbReference type="RefSeq" id="NP_353684.2">
    <property type="nucleotide sequence ID" value="NC_003062.2"/>
</dbReference>
<dbReference type="SMR" id="A7TZT2"/>
<dbReference type="STRING" id="176299.Atu0661"/>
<dbReference type="CAZy" id="GT4">
    <property type="family name" value="Glycosyltransferase Family 4"/>
</dbReference>
<dbReference type="EnsemblBacteria" id="AAK86469">
    <property type="protein sequence ID" value="AAK86469"/>
    <property type="gene ID" value="Atu0661"/>
</dbReference>
<dbReference type="KEGG" id="atu:Atu0661"/>
<dbReference type="PATRIC" id="fig|176299.10.peg.654"/>
<dbReference type="eggNOG" id="COG0438">
    <property type="taxonomic scope" value="Bacteria"/>
</dbReference>
<dbReference type="HOGENOM" id="CLU_009583_2_3_5"/>
<dbReference type="OrthoDB" id="5490290at2"/>
<dbReference type="BioCyc" id="AGRO:ATU0661-MONOMER"/>
<dbReference type="BioCyc" id="MetaCyc:MONOMER-14460"/>
<dbReference type="BRENDA" id="2.4.1.246">
    <property type="organism ID" value="200"/>
</dbReference>
<dbReference type="UniPathway" id="UPA01006">
    <property type="reaction ID" value="UER01009"/>
</dbReference>
<dbReference type="Proteomes" id="UP000000813">
    <property type="component" value="Chromosome circular"/>
</dbReference>
<dbReference type="GO" id="GO:0016758">
    <property type="term" value="F:hexosyltransferase activity"/>
    <property type="evidence" value="ECO:0000314"/>
    <property type="project" value="UniProtKB"/>
</dbReference>
<dbReference type="GO" id="GO:0103011">
    <property type="term" value="F:mannosylfructose-phosphate synthase activity"/>
    <property type="evidence" value="ECO:0007669"/>
    <property type="project" value="UniProtKB-EC"/>
</dbReference>
<dbReference type="GO" id="GO:0046351">
    <property type="term" value="P:disaccharide biosynthetic process"/>
    <property type="evidence" value="ECO:0000314"/>
    <property type="project" value="UniProtKB"/>
</dbReference>
<dbReference type="CDD" id="cd03800">
    <property type="entry name" value="GT4_sucrose_synthase"/>
    <property type="match status" value="1"/>
</dbReference>
<dbReference type="FunFam" id="3.40.50.2000:FF:000308">
    <property type="entry name" value="Glycosyltransferase family 1 protein"/>
    <property type="match status" value="1"/>
</dbReference>
<dbReference type="Gene3D" id="3.40.50.2000">
    <property type="entry name" value="Glycogen Phosphorylase B"/>
    <property type="match status" value="2"/>
</dbReference>
<dbReference type="InterPro" id="IPR001296">
    <property type="entry name" value="Glyco_trans_1"/>
</dbReference>
<dbReference type="InterPro" id="IPR028098">
    <property type="entry name" value="Glyco_trans_4-like_N"/>
</dbReference>
<dbReference type="PANTHER" id="PTHR12526:SF510">
    <property type="entry name" value="D-INOSITOL 3-PHOSPHATE GLYCOSYLTRANSFERASE"/>
    <property type="match status" value="1"/>
</dbReference>
<dbReference type="PANTHER" id="PTHR12526">
    <property type="entry name" value="GLYCOSYLTRANSFERASE"/>
    <property type="match status" value="1"/>
</dbReference>
<dbReference type="Pfam" id="PF13439">
    <property type="entry name" value="Glyco_transf_4"/>
    <property type="match status" value="1"/>
</dbReference>
<dbReference type="Pfam" id="PF00534">
    <property type="entry name" value="Glycos_transf_1"/>
    <property type="match status" value="1"/>
</dbReference>
<dbReference type="SUPFAM" id="SSF53756">
    <property type="entry name" value="UDP-Glycosyltransferase/glycogen phosphorylase"/>
    <property type="match status" value="1"/>
</dbReference>
<proteinExistence type="evidence at protein level"/>
<protein>
    <recommendedName>
        <fullName evidence="5">Mannosylfructose-phosphate synthase</fullName>
        <ecNumber>2.4.1.246</ecNumber>
    </recommendedName>
</protein>
<comment type="catalytic activity">
    <reaction evidence="2">
        <text>beta-D-fructose 6-phosphate + GDP-alpha-D-mannose = beta-D-fructofuranosyl alpha-D-mannopyranoside 6(F)-phosphate + GDP + H(+)</text>
        <dbReference type="Rhea" id="RHEA:26039"/>
        <dbReference type="ChEBI" id="CHEBI:15378"/>
        <dbReference type="ChEBI" id="CHEBI:57527"/>
        <dbReference type="ChEBI" id="CHEBI:57634"/>
        <dbReference type="ChEBI" id="CHEBI:58189"/>
        <dbReference type="ChEBI" id="CHEBI:58870"/>
        <dbReference type="EC" id="2.4.1.246"/>
    </reaction>
</comment>
<comment type="cofactor">
    <cofactor evidence="2">
        <name>Mg(2+)</name>
        <dbReference type="ChEBI" id="CHEBI:18420"/>
    </cofactor>
    <cofactor evidence="2">
        <name>Mn(2+)</name>
        <dbReference type="ChEBI" id="CHEBI:29035"/>
    </cofactor>
</comment>
<comment type="biophysicochemical properties">
    <kinetics>
        <KM evidence="2">1.5 mM for GDP-mannose</KM>
        <KM evidence="2">1 mM for fructose-6-phosphate</KM>
    </kinetics>
    <phDependence>
        <text evidence="2">Optimum pH is 8.0.</text>
    </phDependence>
</comment>
<comment type="pathway">
    <text evidence="2">Carbohydrate metabolism; mannosylfructose biosynthesis; beta-D-fructofuranosyl alpha-D-mannopyranoside from D-fructose 6-phosphate and GDP-alpha-D-mannose: step 1/2.</text>
</comment>
<comment type="induction">
    <text evidence="2">By salt.</text>
</comment>
<comment type="similarity">
    <text evidence="1">Belongs to the glycosyltransferase 1 family.</text>
</comment>
<comment type="sequence caution" evidence="3">
    <conflict type="erroneous initiation">
        <sequence resource="EMBL-CDS" id="AAK86469"/>
    </conflict>
    <text>Truncated N-terminus.</text>
</comment>
<reference evidence="3 5" key="1">
    <citation type="journal article" date="2007" name="Proc. Natl. Acad. Sci. U.S.A.">
        <title>A metabolic pathway leading to mannosylfructose biosynthesis in Agrobacterium tumefaciens uncovers a family of mannosyltransferases.</title>
        <authorList>
            <person name="Torres L.L."/>
            <person name="Salerno G.L."/>
        </authorList>
    </citation>
    <scope>NUCLEOTIDE SEQUENCE [GENOMIC DNA]</scope>
    <scope>CATALYTIC ACTIVITY</scope>
    <scope>COFACTOR</scope>
    <scope>BIOPHYSICOCHEMICAL PROPERTIES</scope>
    <scope>PATHWAY</scope>
    <scope>INDUCTION</scope>
</reference>
<reference evidence="4" key="2">
    <citation type="journal article" date="2001" name="Science">
        <title>The genome of the natural genetic engineer Agrobacterium tumefaciens C58.</title>
        <authorList>
            <person name="Wood D.W."/>
            <person name="Setubal J.C."/>
            <person name="Kaul R."/>
            <person name="Monks D.E."/>
            <person name="Kitajima J.P."/>
            <person name="Okura V.K."/>
            <person name="Zhou Y."/>
            <person name="Chen L."/>
            <person name="Wood G.E."/>
            <person name="Almeida N.F. Jr."/>
            <person name="Woo L."/>
            <person name="Chen Y."/>
            <person name="Paulsen I.T."/>
            <person name="Eisen J.A."/>
            <person name="Karp P.D."/>
            <person name="Bovee D. Sr."/>
            <person name="Chapman P."/>
            <person name="Clendenning J."/>
            <person name="Deatherage G."/>
            <person name="Gillet W."/>
            <person name="Grant C."/>
            <person name="Kutyavin T."/>
            <person name="Levy R."/>
            <person name="Li M.-J."/>
            <person name="McClelland E."/>
            <person name="Palmieri A."/>
            <person name="Raymond C."/>
            <person name="Rouse G."/>
            <person name="Saenphimmachak C."/>
            <person name="Wu Z."/>
            <person name="Romero P."/>
            <person name="Gordon D."/>
            <person name="Zhang S."/>
            <person name="Yoo H."/>
            <person name="Tao Y."/>
            <person name="Biddle P."/>
            <person name="Jung M."/>
            <person name="Krespan W."/>
            <person name="Perry M."/>
            <person name="Gordon-Kamm B."/>
            <person name="Liao L."/>
            <person name="Kim S."/>
            <person name="Hendrick C."/>
            <person name="Zhao Z.-Y."/>
            <person name="Dolan M."/>
            <person name="Chumley F."/>
            <person name="Tingey S.V."/>
            <person name="Tomb J.-F."/>
            <person name="Gordon M.P."/>
            <person name="Olson M.V."/>
            <person name="Nester E.W."/>
        </authorList>
    </citation>
    <scope>NUCLEOTIDE SEQUENCE [LARGE SCALE GENOMIC DNA]</scope>
    <source>
        <strain>C58 / ATCC 33970</strain>
    </source>
</reference>
<reference evidence="4" key="3">
    <citation type="journal article" date="2001" name="Science">
        <title>Genome sequence of the plant pathogen and biotechnology agent Agrobacterium tumefaciens C58.</title>
        <authorList>
            <person name="Goodner B."/>
            <person name="Hinkle G."/>
            <person name="Gattung S."/>
            <person name="Miller N."/>
            <person name="Blanchard M."/>
            <person name="Qurollo B."/>
            <person name="Goldman B.S."/>
            <person name="Cao Y."/>
            <person name="Askenazi M."/>
            <person name="Halling C."/>
            <person name="Mullin L."/>
            <person name="Houmiel K."/>
            <person name="Gordon J."/>
            <person name="Vaudin M."/>
            <person name="Iartchouk O."/>
            <person name="Epp A."/>
            <person name="Liu F."/>
            <person name="Wollam C."/>
            <person name="Allinger M."/>
            <person name="Doughty D."/>
            <person name="Scott C."/>
            <person name="Lappas C."/>
            <person name="Markelz B."/>
            <person name="Flanagan C."/>
            <person name="Crowell C."/>
            <person name="Gurson J."/>
            <person name="Lomo C."/>
            <person name="Sear C."/>
            <person name="Strub G."/>
            <person name="Cielo C."/>
            <person name="Slater S."/>
        </authorList>
    </citation>
    <scope>NUCLEOTIDE SEQUENCE [LARGE SCALE GENOMIC DNA]</scope>
    <source>
        <strain>C58 / ATCC 33970</strain>
    </source>
</reference>